<dbReference type="EC" id="5.4.99.12" evidence="1"/>
<dbReference type="EMBL" id="CP000771">
    <property type="protein sequence ID" value="ABS60541.1"/>
    <property type="molecule type" value="Genomic_DNA"/>
</dbReference>
<dbReference type="RefSeq" id="WP_011993860.1">
    <property type="nucleotide sequence ID" value="NC_009718.1"/>
</dbReference>
<dbReference type="SMR" id="A7HKV8"/>
<dbReference type="STRING" id="381764.Fnod_0686"/>
<dbReference type="KEGG" id="fno:Fnod_0686"/>
<dbReference type="eggNOG" id="COG0101">
    <property type="taxonomic scope" value="Bacteria"/>
</dbReference>
<dbReference type="HOGENOM" id="CLU_014673_0_1_0"/>
<dbReference type="OrthoDB" id="9811823at2"/>
<dbReference type="Proteomes" id="UP000002415">
    <property type="component" value="Chromosome"/>
</dbReference>
<dbReference type="GO" id="GO:0003723">
    <property type="term" value="F:RNA binding"/>
    <property type="evidence" value="ECO:0007669"/>
    <property type="project" value="InterPro"/>
</dbReference>
<dbReference type="GO" id="GO:0160147">
    <property type="term" value="F:tRNA pseudouridine(38-40) synthase activity"/>
    <property type="evidence" value="ECO:0007669"/>
    <property type="project" value="UniProtKB-EC"/>
</dbReference>
<dbReference type="GO" id="GO:0031119">
    <property type="term" value="P:tRNA pseudouridine synthesis"/>
    <property type="evidence" value="ECO:0007669"/>
    <property type="project" value="UniProtKB-UniRule"/>
</dbReference>
<dbReference type="CDD" id="cd02570">
    <property type="entry name" value="PseudoU_synth_EcTruA"/>
    <property type="match status" value="1"/>
</dbReference>
<dbReference type="FunFam" id="3.30.70.580:FF:000001">
    <property type="entry name" value="tRNA pseudouridine synthase A"/>
    <property type="match status" value="1"/>
</dbReference>
<dbReference type="Gene3D" id="3.30.70.660">
    <property type="entry name" value="Pseudouridine synthase I, catalytic domain, C-terminal subdomain"/>
    <property type="match status" value="1"/>
</dbReference>
<dbReference type="Gene3D" id="3.30.70.580">
    <property type="entry name" value="Pseudouridine synthase I, catalytic domain, N-terminal subdomain"/>
    <property type="match status" value="1"/>
</dbReference>
<dbReference type="HAMAP" id="MF_00171">
    <property type="entry name" value="TruA"/>
    <property type="match status" value="1"/>
</dbReference>
<dbReference type="InterPro" id="IPR020103">
    <property type="entry name" value="PsdUridine_synth_cat_dom_sf"/>
</dbReference>
<dbReference type="InterPro" id="IPR001406">
    <property type="entry name" value="PsdUridine_synth_TruA"/>
</dbReference>
<dbReference type="InterPro" id="IPR020097">
    <property type="entry name" value="PsdUridine_synth_TruA_a/b_dom"/>
</dbReference>
<dbReference type="InterPro" id="IPR020095">
    <property type="entry name" value="PsdUridine_synth_TruA_C"/>
</dbReference>
<dbReference type="InterPro" id="IPR020094">
    <property type="entry name" value="TruA/RsuA/RluB/E/F_N"/>
</dbReference>
<dbReference type="NCBIfam" id="TIGR00071">
    <property type="entry name" value="hisT_truA"/>
    <property type="match status" value="1"/>
</dbReference>
<dbReference type="PANTHER" id="PTHR11142">
    <property type="entry name" value="PSEUDOURIDYLATE SYNTHASE"/>
    <property type="match status" value="1"/>
</dbReference>
<dbReference type="PANTHER" id="PTHR11142:SF0">
    <property type="entry name" value="TRNA PSEUDOURIDINE SYNTHASE-LIKE 1"/>
    <property type="match status" value="1"/>
</dbReference>
<dbReference type="Pfam" id="PF01416">
    <property type="entry name" value="PseudoU_synth_1"/>
    <property type="match status" value="2"/>
</dbReference>
<dbReference type="PIRSF" id="PIRSF001430">
    <property type="entry name" value="tRNA_psdUrid_synth"/>
    <property type="match status" value="1"/>
</dbReference>
<dbReference type="SUPFAM" id="SSF55120">
    <property type="entry name" value="Pseudouridine synthase"/>
    <property type="match status" value="1"/>
</dbReference>
<organism>
    <name type="scientific">Fervidobacterium nodosum (strain ATCC 35602 / DSM 5306 / Rt17-B1)</name>
    <dbReference type="NCBI Taxonomy" id="381764"/>
    <lineage>
        <taxon>Bacteria</taxon>
        <taxon>Thermotogati</taxon>
        <taxon>Thermotogota</taxon>
        <taxon>Thermotogae</taxon>
        <taxon>Thermotogales</taxon>
        <taxon>Fervidobacteriaceae</taxon>
        <taxon>Fervidobacterium</taxon>
    </lineage>
</organism>
<gene>
    <name evidence="1" type="primary">truA</name>
    <name type="ordered locus">Fnod_0686</name>
</gene>
<proteinExistence type="inferred from homology"/>
<sequence>MRRVAIEFSYDGTDFFGYQIQNNVRTVQGELEKALEKVFKIHIDTYAAGRTDTGVHANGQVVSFDCPNDRLMENDIKNAINANLPGDIYIKKVWFTHPTFNPRYEAKRRIYHYYIDTSKSKNLFTRRYVWWFPYELDIEKMRIAAKYLIGEHDFISFSKKGEENTKTIRTINNLRIIEIKNGLILIRVEGISFLRGMVRSIVANLVRVGTGIWEPEKVKEVLESKDRSKSAGLAPAHGLFLYKVLF</sequence>
<keyword id="KW-0413">Isomerase</keyword>
<keyword id="KW-1185">Reference proteome</keyword>
<keyword id="KW-0819">tRNA processing</keyword>
<feature type="chain" id="PRO_1000071594" description="tRNA pseudouridine synthase A">
    <location>
        <begin position="1"/>
        <end position="246"/>
    </location>
</feature>
<feature type="active site" description="Nucleophile" evidence="1">
    <location>
        <position position="52"/>
    </location>
</feature>
<feature type="binding site" evidence="1">
    <location>
        <position position="111"/>
    </location>
    <ligand>
        <name>substrate</name>
    </ligand>
</feature>
<reference key="1">
    <citation type="submission" date="2007-07" db="EMBL/GenBank/DDBJ databases">
        <title>Complete sequence of Fervidobacterium nodosum Rt17-B1.</title>
        <authorList>
            <consortium name="US DOE Joint Genome Institute"/>
            <person name="Copeland A."/>
            <person name="Lucas S."/>
            <person name="Lapidus A."/>
            <person name="Barry K."/>
            <person name="Glavina del Rio T."/>
            <person name="Dalin E."/>
            <person name="Tice H."/>
            <person name="Pitluck S."/>
            <person name="Saunders E."/>
            <person name="Brettin T."/>
            <person name="Bruce D."/>
            <person name="Detter J.C."/>
            <person name="Han C."/>
            <person name="Schmutz J."/>
            <person name="Larimer F."/>
            <person name="Land M."/>
            <person name="Hauser L."/>
            <person name="Kyrpides N."/>
            <person name="Mikhailova N."/>
            <person name="Nelson K."/>
            <person name="Gogarten J.P."/>
            <person name="Noll K."/>
            <person name="Richardson P."/>
        </authorList>
    </citation>
    <scope>NUCLEOTIDE SEQUENCE [LARGE SCALE GENOMIC DNA]</scope>
    <source>
        <strain>ATCC 35602 / DSM 5306 / Rt17-B1</strain>
    </source>
</reference>
<comment type="function">
    <text evidence="1">Formation of pseudouridine at positions 38, 39 and 40 in the anticodon stem and loop of transfer RNAs.</text>
</comment>
<comment type="catalytic activity">
    <reaction evidence="1">
        <text>uridine(38/39/40) in tRNA = pseudouridine(38/39/40) in tRNA</text>
        <dbReference type="Rhea" id="RHEA:22376"/>
        <dbReference type="Rhea" id="RHEA-COMP:10085"/>
        <dbReference type="Rhea" id="RHEA-COMP:10087"/>
        <dbReference type="ChEBI" id="CHEBI:65314"/>
        <dbReference type="ChEBI" id="CHEBI:65315"/>
        <dbReference type="EC" id="5.4.99.12"/>
    </reaction>
</comment>
<comment type="subunit">
    <text evidence="1">Homodimer.</text>
</comment>
<comment type="similarity">
    <text evidence="1">Belongs to the tRNA pseudouridine synthase TruA family.</text>
</comment>
<protein>
    <recommendedName>
        <fullName evidence="1">tRNA pseudouridine synthase A</fullName>
        <ecNumber evidence="1">5.4.99.12</ecNumber>
    </recommendedName>
    <alternativeName>
        <fullName evidence="1">tRNA pseudouridine(38-40) synthase</fullName>
    </alternativeName>
    <alternativeName>
        <fullName evidence="1">tRNA pseudouridylate synthase I</fullName>
    </alternativeName>
    <alternativeName>
        <fullName evidence="1">tRNA-uridine isomerase I</fullName>
    </alternativeName>
</protein>
<evidence type="ECO:0000255" key="1">
    <source>
        <dbReference type="HAMAP-Rule" id="MF_00171"/>
    </source>
</evidence>
<name>TRUA_FERNB</name>
<accession>A7HKV8</accession>